<protein>
    <recommendedName>
        <fullName evidence="1">Elongation factor G</fullName>
        <shortName evidence="1">EF-G</shortName>
    </recommendedName>
</protein>
<proteinExistence type="inferred from homology"/>
<dbReference type="EMBL" id="CP001280">
    <property type="protein sequence ID" value="ACK49555.1"/>
    <property type="molecule type" value="Genomic_DNA"/>
</dbReference>
<dbReference type="RefSeq" id="WP_012589625.1">
    <property type="nucleotide sequence ID" value="NC_011666.1"/>
</dbReference>
<dbReference type="SMR" id="B8ELG6"/>
<dbReference type="STRING" id="395965.Msil_0583"/>
<dbReference type="KEGG" id="msl:Msil_0583"/>
<dbReference type="eggNOG" id="COG0480">
    <property type="taxonomic scope" value="Bacteria"/>
</dbReference>
<dbReference type="HOGENOM" id="CLU_002794_4_1_5"/>
<dbReference type="OrthoDB" id="9802948at2"/>
<dbReference type="Proteomes" id="UP000002257">
    <property type="component" value="Chromosome"/>
</dbReference>
<dbReference type="GO" id="GO:0005737">
    <property type="term" value="C:cytoplasm"/>
    <property type="evidence" value="ECO:0007669"/>
    <property type="project" value="UniProtKB-SubCell"/>
</dbReference>
<dbReference type="GO" id="GO:0005525">
    <property type="term" value="F:GTP binding"/>
    <property type="evidence" value="ECO:0007669"/>
    <property type="project" value="UniProtKB-UniRule"/>
</dbReference>
<dbReference type="GO" id="GO:0003924">
    <property type="term" value="F:GTPase activity"/>
    <property type="evidence" value="ECO:0007669"/>
    <property type="project" value="InterPro"/>
</dbReference>
<dbReference type="GO" id="GO:0003746">
    <property type="term" value="F:translation elongation factor activity"/>
    <property type="evidence" value="ECO:0007669"/>
    <property type="project" value="UniProtKB-UniRule"/>
</dbReference>
<dbReference type="GO" id="GO:0032790">
    <property type="term" value="P:ribosome disassembly"/>
    <property type="evidence" value="ECO:0007669"/>
    <property type="project" value="TreeGrafter"/>
</dbReference>
<dbReference type="CDD" id="cd01886">
    <property type="entry name" value="EF-G"/>
    <property type="match status" value="1"/>
</dbReference>
<dbReference type="CDD" id="cd16262">
    <property type="entry name" value="EFG_III"/>
    <property type="match status" value="1"/>
</dbReference>
<dbReference type="CDD" id="cd01434">
    <property type="entry name" value="EFG_mtEFG1_IV"/>
    <property type="match status" value="1"/>
</dbReference>
<dbReference type="CDD" id="cd03713">
    <property type="entry name" value="EFG_mtEFG_C"/>
    <property type="match status" value="1"/>
</dbReference>
<dbReference type="CDD" id="cd04088">
    <property type="entry name" value="EFG_mtEFG_II"/>
    <property type="match status" value="1"/>
</dbReference>
<dbReference type="FunFam" id="2.40.30.10:FF:000006">
    <property type="entry name" value="Elongation factor G"/>
    <property type="match status" value="1"/>
</dbReference>
<dbReference type="FunFam" id="3.30.230.10:FF:000003">
    <property type="entry name" value="Elongation factor G"/>
    <property type="match status" value="1"/>
</dbReference>
<dbReference type="FunFam" id="3.30.70.240:FF:000001">
    <property type="entry name" value="Elongation factor G"/>
    <property type="match status" value="1"/>
</dbReference>
<dbReference type="FunFam" id="3.30.70.870:FF:000001">
    <property type="entry name" value="Elongation factor G"/>
    <property type="match status" value="1"/>
</dbReference>
<dbReference type="FunFam" id="3.40.50.300:FF:000029">
    <property type="entry name" value="Elongation factor G"/>
    <property type="match status" value="1"/>
</dbReference>
<dbReference type="Gene3D" id="3.30.230.10">
    <property type="match status" value="1"/>
</dbReference>
<dbReference type="Gene3D" id="3.30.70.240">
    <property type="match status" value="1"/>
</dbReference>
<dbReference type="Gene3D" id="3.30.70.870">
    <property type="entry name" value="Elongation Factor G (Translational Gtpase), domain 3"/>
    <property type="match status" value="1"/>
</dbReference>
<dbReference type="Gene3D" id="3.40.50.300">
    <property type="entry name" value="P-loop containing nucleotide triphosphate hydrolases"/>
    <property type="match status" value="1"/>
</dbReference>
<dbReference type="Gene3D" id="2.40.30.10">
    <property type="entry name" value="Translation factors"/>
    <property type="match status" value="1"/>
</dbReference>
<dbReference type="HAMAP" id="MF_00054_B">
    <property type="entry name" value="EF_G_EF_2_B"/>
    <property type="match status" value="1"/>
</dbReference>
<dbReference type="InterPro" id="IPR053905">
    <property type="entry name" value="EF-G-like_DII"/>
</dbReference>
<dbReference type="InterPro" id="IPR041095">
    <property type="entry name" value="EFG_II"/>
</dbReference>
<dbReference type="InterPro" id="IPR009022">
    <property type="entry name" value="EFG_III"/>
</dbReference>
<dbReference type="InterPro" id="IPR035647">
    <property type="entry name" value="EFG_III/V"/>
</dbReference>
<dbReference type="InterPro" id="IPR047872">
    <property type="entry name" value="EFG_IV"/>
</dbReference>
<dbReference type="InterPro" id="IPR035649">
    <property type="entry name" value="EFG_V"/>
</dbReference>
<dbReference type="InterPro" id="IPR000640">
    <property type="entry name" value="EFG_V-like"/>
</dbReference>
<dbReference type="InterPro" id="IPR031157">
    <property type="entry name" value="G_TR_CS"/>
</dbReference>
<dbReference type="InterPro" id="IPR027417">
    <property type="entry name" value="P-loop_NTPase"/>
</dbReference>
<dbReference type="InterPro" id="IPR020568">
    <property type="entry name" value="Ribosomal_Su5_D2-typ_SF"/>
</dbReference>
<dbReference type="InterPro" id="IPR014721">
    <property type="entry name" value="Ribsml_uS5_D2-typ_fold_subgr"/>
</dbReference>
<dbReference type="InterPro" id="IPR005225">
    <property type="entry name" value="Small_GTP-bd"/>
</dbReference>
<dbReference type="InterPro" id="IPR000795">
    <property type="entry name" value="T_Tr_GTP-bd_dom"/>
</dbReference>
<dbReference type="InterPro" id="IPR009000">
    <property type="entry name" value="Transl_B-barrel_sf"/>
</dbReference>
<dbReference type="InterPro" id="IPR004540">
    <property type="entry name" value="Transl_elong_EFG/EF2"/>
</dbReference>
<dbReference type="InterPro" id="IPR005517">
    <property type="entry name" value="Transl_elong_EFG/EF2_IV"/>
</dbReference>
<dbReference type="NCBIfam" id="TIGR00484">
    <property type="entry name" value="EF-G"/>
    <property type="match status" value="1"/>
</dbReference>
<dbReference type="NCBIfam" id="NF009381">
    <property type="entry name" value="PRK12740.1-5"/>
    <property type="match status" value="1"/>
</dbReference>
<dbReference type="NCBIfam" id="TIGR00231">
    <property type="entry name" value="small_GTP"/>
    <property type="match status" value="1"/>
</dbReference>
<dbReference type="PANTHER" id="PTHR43261:SF1">
    <property type="entry name" value="RIBOSOME-RELEASING FACTOR 2, MITOCHONDRIAL"/>
    <property type="match status" value="1"/>
</dbReference>
<dbReference type="PANTHER" id="PTHR43261">
    <property type="entry name" value="TRANSLATION ELONGATION FACTOR G-RELATED"/>
    <property type="match status" value="1"/>
</dbReference>
<dbReference type="Pfam" id="PF22042">
    <property type="entry name" value="EF-G_D2"/>
    <property type="match status" value="1"/>
</dbReference>
<dbReference type="Pfam" id="PF00679">
    <property type="entry name" value="EFG_C"/>
    <property type="match status" value="1"/>
</dbReference>
<dbReference type="Pfam" id="PF14492">
    <property type="entry name" value="EFG_III"/>
    <property type="match status" value="1"/>
</dbReference>
<dbReference type="Pfam" id="PF03764">
    <property type="entry name" value="EFG_IV"/>
    <property type="match status" value="1"/>
</dbReference>
<dbReference type="Pfam" id="PF00009">
    <property type="entry name" value="GTP_EFTU"/>
    <property type="match status" value="1"/>
</dbReference>
<dbReference type="PRINTS" id="PR00315">
    <property type="entry name" value="ELONGATNFCT"/>
</dbReference>
<dbReference type="SMART" id="SM00838">
    <property type="entry name" value="EFG_C"/>
    <property type="match status" value="1"/>
</dbReference>
<dbReference type="SMART" id="SM00889">
    <property type="entry name" value="EFG_IV"/>
    <property type="match status" value="1"/>
</dbReference>
<dbReference type="SUPFAM" id="SSF54980">
    <property type="entry name" value="EF-G C-terminal domain-like"/>
    <property type="match status" value="2"/>
</dbReference>
<dbReference type="SUPFAM" id="SSF52540">
    <property type="entry name" value="P-loop containing nucleoside triphosphate hydrolases"/>
    <property type="match status" value="1"/>
</dbReference>
<dbReference type="SUPFAM" id="SSF54211">
    <property type="entry name" value="Ribosomal protein S5 domain 2-like"/>
    <property type="match status" value="1"/>
</dbReference>
<dbReference type="SUPFAM" id="SSF50447">
    <property type="entry name" value="Translation proteins"/>
    <property type="match status" value="1"/>
</dbReference>
<dbReference type="PROSITE" id="PS00301">
    <property type="entry name" value="G_TR_1"/>
    <property type="match status" value="1"/>
</dbReference>
<dbReference type="PROSITE" id="PS51722">
    <property type="entry name" value="G_TR_2"/>
    <property type="match status" value="1"/>
</dbReference>
<keyword id="KW-0963">Cytoplasm</keyword>
<keyword id="KW-0251">Elongation factor</keyword>
<keyword id="KW-0342">GTP-binding</keyword>
<keyword id="KW-0547">Nucleotide-binding</keyword>
<keyword id="KW-0648">Protein biosynthesis</keyword>
<keyword id="KW-1185">Reference proteome</keyword>
<name>EFG_METSB</name>
<sequence length="691" mass="76289">MPRSHNIEDYRNFGIMAHIDAGKTTTTERILYYSGKSHKIGEVHDGAATMDWMEQEQERGITITSAATTTFWNGKRLNIIDTPGHVDFTIEVERSLRVLDGAVCVLDGNQGVEPQTETVWRQADKYHVPRIVFVNKMDKIGADFYRCVDEIKTKVGGRPVCIQLPIGSESDFKGIIDLVRMKAVVWQDEALGAKYNDAEIPAELLAKAEEYRHILIETAVELDDDVMSAYLDGVEPDEETLKRLIRKAVRYITFIPILCGSAFKNKGVQPLLDAVVDYLPSPIDREAIKGVDVDTGEEVLRMPRDEDPFSMLAFKIMDDPFVGTLTFARVYSGHVESGTTVLNSTKDKKERIGRMLLMHANNREDVKEAYSGDIVALAGLKDTRTGDTLCDLSKPVILERMEFPEPVIEIAIEPKSKADQEKLGLALAKLAAEDPSFRVSTDQESGQTILKGMGELHLDIKVDILRRTYKVDANIGAPQVAYRERLTKRVEIDHTHKKQTGGTGQFARVIIVFEPNEAGAGNVFESKIVGGSVPKEFIPGVEKGINSVMGSGILAGFPVVDVKATLIDGGFHDVDSSVLAFEIAARAAFREALQKGGSVLLEPIMKVEVTTPEDYTGSVMGDLLGRRGQVQGQDMRGNAVVINAMVPLANMFGYVNQLRSFSQGRANYTMQFDHYEQVPAGEAAKVQAKYA</sequence>
<accession>B8ELG6</accession>
<reference key="1">
    <citation type="journal article" date="2010" name="J. Bacteriol.">
        <title>Complete genome sequence of the aerobic facultative methanotroph Methylocella silvestris BL2.</title>
        <authorList>
            <person name="Chen Y."/>
            <person name="Crombie A."/>
            <person name="Rahman M.T."/>
            <person name="Dedysh S.N."/>
            <person name="Liesack W."/>
            <person name="Stott M.B."/>
            <person name="Alam M."/>
            <person name="Theisen A.R."/>
            <person name="Murrell J.C."/>
            <person name="Dunfield P.F."/>
        </authorList>
    </citation>
    <scope>NUCLEOTIDE SEQUENCE [LARGE SCALE GENOMIC DNA]</scope>
    <source>
        <strain>DSM 15510 / CIP 108128 / LMG 27833 / NCIMB 13906 / BL2</strain>
    </source>
</reference>
<gene>
    <name evidence="1" type="primary">fusA</name>
    <name type="ordered locus">Msil_0583</name>
</gene>
<comment type="function">
    <text evidence="1">Catalyzes the GTP-dependent ribosomal translocation step during translation elongation. During this step, the ribosome changes from the pre-translocational (PRE) to the post-translocational (POST) state as the newly formed A-site-bound peptidyl-tRNA and P-site-bound deacylated tRNA move to the P and E sites, respectively. Catalyzes the coordinated movement of the two tRNA molecules, the mRNA and conformational changes in the ribosome.</text>
</comment>
<comment type="subcellular location">
    <subcellularLocation>
        <location evidence="1">Cytoplasm</location>
    </subcellularLocation>
</comment>
<comment type="similarity">
    <text evidence="1">Belongs to the TRAFAC class translation factor GTPase superfamily. Classic translation factor GTPase family. EF-G/EF-2 subfamily.</text>
</comment>
<feature type="chain" id="PRO_1000201475" description="Elongation factor G">
    <location>
        <begin position="1"/>
        <end position="691"/>
    </location>
</feature>
<feature type="domain" description="tr-type G">
    <location>
        <begin position="8"/>
        <end position="283"/>
    </location>
</feature>
<feature type="binding site" evidence="1">
    <location>
        <begin position="17"/>
        <end position="24"/>
    </location>
    <ligand>
        <name>GTP</name>
        <dbReference type="ChEBI" id="CHEBI:37565"/>
    </ligand>
</feature>
<feature type="binding site" evidence="1">
    <location>
        <begin position="81"/>
        <end position="85"/>
    </location>
    <ligand>
        <name>GTP</name>
        <dbReference type="ChEBI" id="CHEBI:37565"/>
    </ligand>
</feature>
<feature type="binding site" evidence="1">
    <location>
        <begin position="135"/>
        <end position="138"/>
    </location>
    <ligand>
        <name>GTP</name>
        <dbReference type="ChEBI" id="CHEBI:37565"/>
    </ligand>
</feature>
<evidence type="ECO:0000255" key="1">
    <source>
        <dbReference type="HAMAP-Rule" id="MF_00054"/>
    </source>
</evidence>
<organism>
    <name type="scientific">Methylocella silvestris (strain DSM 15510 / CIP 108128 / LMG 27833 / NCIMB 13906 / BL2)</name>
    <dbReference type="NCBI Taxonomy" id="395965"/>
    <lineage>
        <taxon>Bacteria</taxon>
        <taxon>Pseudomonadati</taxon>
        <taxon>Pseudomonadota</taxon>
        <taxon>Alphaproteobacteria</taxon>
        <taxon>Hyphomicrobiales</taxon>
        <taxon>Beijerinckiaceae</taxon>
        <taxon>Methylocella</taxon>
    </lineage>
</organism>